<organismHost>
    <name type="scientific">Homo sapiens</name>
    <name type="common">Human</name>
    <dbReference type="NCBI Taxonomy" id="9606"/>
</organismHost>
<protein>
    <recommendedName>
        <fullName>Ankyrin repeat protein OPG189</fullName>
    </recommendedName>
</protein>
<sequence length="558" mass="65272">MDFFKKEILDWSVYLSLHYIARVCSNSSTSHIIQDYNLIRTYEKVDKTIVDFLSRLPNLFHILEYGENILHIYSMDDANTNIIIFFLDRVLNINKNGSFIHNLRLSSSINIKEYVYQLVNNDHPDNRIRLMLENGRRTRHFLSYISDTVNIYICILINHGFYIDAEDSYGCTLLHRCIYHYKKSESESYNELIKILLNNGSDVDKKDTYGNTPFILLCKHDINNVELFEICLENANIDSVDFNRYTPLHYVSCRNKYDFVKLLISKGANVNARNKFGTTPFYCGIIHGISLIKLYLESDTELEIDNEHIVRHLIIFDAVESLDYLLSRGVIDINYRTIYNETSIYDAVSYNAYNTLVYLLNRNGDFETITTSGCTCISEAVANNNKIIMEVLLSKRPSLKIMIQSMIAITKNKQHNADLLKMCIKYTACMTDYDTLIDVQSLQQYKWYILKCFDEIDIMKRCYIKNKTVFQLVFCIKDINTLMRYGKHPSFVKCTSLDVYGSRVRNIIASIRYRQRLISLLSKKLDAGDKWSCFPNEIKYKILENFNDNELSTYLKIL</sequence>
<evidence type="ECO:0000250" key="1">
    <source>
        <dbReference type="UniProtKB" id="P24769"/>
    </source>
</evidence>
<evidence type="ECO:0000305" key="2"/>
<organism>
    <name type="scientific">Vaccinia virus (strain Copenhagen)</name>
    <name type="common">VACV</name>
    <dbReference type="NCBI Taxonomy" id="10249"/>
    <lineage>
        <taxon>Viruses</taxon>
        <taxon>Varidnaviria</taxon>
        <taxon>Bamfordvirae</taxon>
        <taxon>Nucleocytoviricota</taxon>
        <taxon>Pokkesviricetes</taxon>
        <taxon>Chitovirales</taxon>
        <taxon>Poxviridae</taxon>
        <taxon>Chordopoxvirinae</taxon>
        <taxon>Orthopoxvirus</taxon>
        <taxon>Vaccinia virus</taxon>
    </lineage>
</organism>
<name>PG189_VACCC</name>
<reference key="1">
    <citation type="journal article" date="1990" name="Virology">
        <title>The complete DNA sequence of vaccinia virus.</title>
        <authorList>
            <person name="Goebel S.J."/>
            <person name="Johnson G.P."/>
            <person name="Perkus M.E."/>
            <person name="Davis S.W."/>
            <person name="Winslow J.P."/>
            <person name="Paoletti E."/>
        </authorList>
    </citation>
    <scope>NUCLEOTIDE SEQUENCE [LARGE SCALE GENOMIC DNA]</scope>
</reference>
<reference key="2">
    <citation type="journal article" date="1990" name="Virology">
        <title>Appendix to 'The complete DNA sequence of vaccinia virus'.</title>
        <authorList>
            <person name="Goebel S.J."/>
            <person name="Johnson G.P."/>
            <person name="Perkus M.E."/>
            <person name="Davis S.W."/>
            <person name="Winslow J.P."/>
            <person name="Paoletti E."/>
        </authorList>
    </citation>
    <scope>NUCLEOTIDE SEQUENCE [LARGE SCALE GENOMIC DNA]</scope>
</reference>
<keyword id="KW-0040">ANK repeat</keyword>
<keyword id="KW-0426">Late protein</keyword>
<keyword id="KW-1185">Reference proteome</keyword>
<keyword id="KW-0677">Repeat</keyword>
<accession>P21001</accession>
<proteinExistence type="inferred from homology"/>
<gene>
    <name type="primary">OPG189</name>
    <name type="ORF">B4R</name>
</gene>
<feature type="chain" id="PRO_0000067084" description="Ankyrin repeat protein OPG189">
    <location>
        <begin position="1"/>
        <end position="558"/>
    </location>
</feature>
<feature type="repeat" description="ANK 1">
    <location>
        <begin position="65"/>
        <end position="95"/>
    </location>
</feature>
<feature type="repeat" description="ANK 2">
    <location>
        <begin position="169"/>
        <end position="205"/>
    </location>
</feature>
<feature type="repeat" description="ANK 3">
    <location>
        <begin position="209"/>
        <end position="239"/>
    </location>
</feature>
<feature type="repeat" description="ANK 4">
    <location>
        <begin position="243"/>
        <end position="272"/>
    </location>
</feature>
<feature type="repeat" description="ANK 5">
    <location>
        <begin position="276"/>
        <end position="304"/>
    </location>
</feature>
<feature type="repeat" description="ANK 6">
    <location>
        <begin position="339"/>
        <end position="368"/>
    </location>
</feature>
<feature type="repeat" description="ANK 7">
    <location>
        <begin position="372"/>
        <end position="401"/>
    </location>
</feature>
<comment type="function">
    <text evidence="1">Contributes to viral release without involving rearrangement of host actin.</text>
</comment>
<comment type="similarity">
    <text evidence="2">Belongs to the orthopoxvirus OPG189 protein family.</text>
</comment>
<dbReference type="EMBL" id="M35027">
    <property type="protein sequence ID" value="AAA48200.1"/>
    <property type="molecule type" value="Genomic_DNA"/>
</dbReference>
<dbReference type="PIR" id="C42526">
    <property type="entry name" value="C42526"/>
</dbReference>
<dbReference type="SMR" id="P21001"/>
<dbReference type="Proteomes" id="UP000008269">
    <property type="component" value="Segment"/>
</dbReference>
<dbReference type="Gene3D" id="1.25.40.20">
    <property type="entry name" value="Ankyrin repeat-containing domain"/>
    <property type="match status" value="3"/>
</dbReference>
<dbReference type="InterPro" id="IPR002110">
    <property type="entry name" value="Ankyrin_rpt"/>
</dbReference>
<dbReference type="InterPro" id="IPR036770">
    <property type="entry name" value="Ankyrin_rpt-contain_sf"/>
</dbReference>
<dbReference type="InterPro" id="IPR018272">
    <property type="entry name" value="PRANC_domain"/>
</dbReference>
<dbReference type="PANTHER" id="PTHR24126:SF14">
    <property type="entry name" value="ANK_REP_REGION DOMAIN-CONTAINING PROTEIN"/>
    <property type="match status" value="1"/>
</dbReference>
<dbReference type="PANTHER" id="PTHR24126">
    <property type="entry name" value="ANKYRIN REPEAT, PH AND SEC7 DOMAIN CONTAINING PROTEIN SECG-RELATED"/>
    <property type="match status" value="1"/>
</dbReference>
<dbReference type="Pfam" id="PF12796">
    <property type="entry name" value="Ank_2"/>
    <property type="match status" value="1"/>
</dbReference>
<dbReference type="Pfam" id="PF09372">
    <property type="entry name" value="PRANC"/>
    <property type="match status" value="1"/>
</dbReference>
<dbReference type="SMART" id="SM00248">
    <property type="entry name" value="ANK"/>
    <property type="match status" value="7"/>
</dbReference>
<dbReference type="SUPFAM" id="SSF48403">
    <property type="entry name" value="Ankyrin repeat"/>
    <property type="match status" value="1"/>
</dbReference>
<dbReference type="PROSITE" id="PS50297">
    <property type="entry name" value="ANK_REP_REGION"/>
    <property type="match status" value="1"/>
</dbReference>
<dbReference type="PROSITE" id="PS50088">
    <property type="entry name" value="ANK_REPEAT"/>
    <property type="match status" value="1"/>
</dbReference>